<name>TRPC_BURP1</name>
<keyword id="KW-0028">Amino-acid biosynthesis</keyword>
<keyword id="KW-0057">Aromatic amino acid biosynthesis</keyword>
<keyword id="KW-0210">Decarboxylase</keyword>
<keyword id="KW-0456">Lyase</keyword>
<keyword id="KW-0822">Tryptophan biosynthesis</keyword>
<gene>
    <name evidence="1" type="primary">trpC</name>
    <name type="ordered locus">BURPS1710b_3578</name>
</gene>
<evidence type="ECO:0000255" key="1">
    <source>
        <dbReference type="HAMAP-Rule" id="MF_00134"/>
    </source>
</evidence>
<comment type="catalytic activity">
    <reaction evidence="1">
        <text>1-(2-carboxyphenylamino)-1-deoxy-D-ribulose 5-phosphate + H(+) = (1S,2R)-1-C-(indol-3-yl)glycerol 3-phosphate + CO2 + H2O</text>
        <dbReference type="Rhea" id="RHEA:23476"/>
        <dbReference type="ChEBI" id="CHEBI:15377"/>
        <dbReference type="ChEBI" id="CHEBI:15378"/>
        <dbReference type="ChEBI" id="CHEBI:16526"/>
        <dbReference type="ChEBI" id="CHEBI:58613"/>
        <dbReference type="ChEBI" id="CHEBI:58866"/>
        <dbReference type="EC" id="4.1.1.48"/>
    </reaction>
</comment>
<comment type="pathway">
    <text evidence="1">Amino-acid biosynthesis; L-tryptophan biosynthesis; L-tryptophan from chorismate: step 4/5.</text>
</comment>
<comment type="similarity">
    <text evidence="1">Belongs to the TrpC family.</text>
</comment>
<proteinExistence type="inferred from homology"/>
<sequence length="261" mass="28334">MSDILDKIITVKREEIAAALESAPLEELKVQASARDSRDFVGALRDKHAAGHAAVIAEVKKASPSKGVLRKHFVPADIARSYAQHGAACLSVLTDERFFQGSARYLEQARAACALPVLRKDFIVDAYQVLEARAMGADAILLIAAALDTPLMIDLEAYAHSLGLAVLVEVHNRGELDEALKLKTPLVGINNRNLRTFETTIDTTLGMLDAIPDDRIVVTESGILSRADVERMEAAGVHTFLVGEAFMRAENPGAELARMFF</sequence>
<accession>Q3JNB0</accession>
<organism>
    <name type="scientific">Burkholderia pseudomallei (strain 1710b)</name>
    <dbReference type="NCBI Taxonomy" id="320372"/>
    <lineage>
        <taxon>Bacteria</taxon>
        <taxon>Pseudomonadati</taxon>
        <taxon>Pseudomonadota</taxon>
        <taxon>Betaproteobacteria</taxon>
        <taxon>Burkholderiales</taxon>
        <taxon>Burkholderiaceae</taxon>
        <taxon>Burkholderia</taxon>
        <taxon>pseudomallei group</taxon>
    </lineage>
</organism>
<dbReference type="EC" id="4.1.1.48" evidence="1"/>
<dbReference type="EMBL" id="CP000124">
    <property type="protein sequence ID" value="ABA50348.1"/>
    <property type="molecule type" value="Genomic_DNA"/>
</dbReference>
<dbReference type="RefSeq" id="WP_004527793.1">
    <property type="nucleotide sequence ID" value="NC_007434.1"/>
</dbReference>
<dbReference type="SMR" id="Q3JNB0"/>
<dbReference type="EnsemblBacteria" id="ABA50348">
    <property type="protein sequence ID" value="ABA50348"/>
    <property type="gene ID" value="BURPS1710b_3578"/>
</dbReference>
<dbReference type="KEGG" id="bpm:BURPS1710b_3578"/>
<dbReference type="HOGENOM" id="CLU_034247_2_0_4"/>
<dbReference type="UniPathway" id="UPA00035">
    <property type="reaction ID" value="UER00043"/>
</dbReference>
<dbReference type="Proteomes" id="UP000002700">
    <property type="component" value="Chromosome I"/>
</dbReference>
<dbReference type="GO" id="GO:0004425">
    <property type="term" value="F:indole-3-glycerol-phosphate synthase activity"/>
    <property type="evidence" value="ECO:0007669"/>
    <property type="project" value="UniProtKB-UniRule"/>
</dbReference>
<dbReference type="GO" id="GO:0004640">
    <property type="term" value="F:phosphoribosylanthranilate isomerase activity"/>
    <property type="evidence" value="ECO:0007669"/>
    <property type="project" value="TreeGrafter"/>
</dbReference>
<dbReference type="GO" id="GO:0000162">
    <property type="term" value="P:L-tryptophan biosynthetic process"/>
    <property type="evidence" value="ECO:0007669"/>
    <property type="project" value="UniProtKB-UniRule"/>
</dbReference>
<dbReference type="CDD" id="cd00331">
    <property type="entry name" value="IGPS"/>
    <property type="match status" value="1"/>
</dbReference>
<dbReference type="FunFam" id="3.20.20.70:FF:000024">
    <property type="entry name" value="Indole-3-glycerol phosphate synthase"/>
    <property type="match status" value="1"/>
</dbReference>
<dbReference type="Gene3D" id="3.20.20.70">
    <property type="entry name" value="Aldolase class I"/>
    <property type="match status" value="1"/>
</dbReference>
<dbReference type="HAMAP" id="MF_00134_B">
    <property type="entry name" value="IGPS_B"/>
    <property type="match status" value="1"/>
</dbReference>
<dbReference type="InterPro" id="IPR013785">
    <property type="entry name" value="Aldolase_TIM"/>
</dbReference>
<dbReference type="InterPro" id="IPR045186">
    <property type="entry name" value="Indole-3-glycerol_P_synth"/>
</dbReference>
<dbReference type="InterPro" id="IPR013798">
    <property type="entry name" value="Indole-3-glycerol_P_synth_dom"/>
</dbReference>
<dbReference type="InterPro" id="IPR001468">
    <property type="entry name" value="Indole-3-GlycerolPSynthase_CS"/>
</dbReference>
<dbReference type="InterPro" id="IPR011060">
    <property type="entry name" value="RibuloseP-bd_barrel"/>
</dbReference>
<dbReference type="NCBIfam" id="NF001373">
    <property type="entry name" value="PRK00278.1-6"/>
    <property type="match status" value="1"/>
</dbReference>
<dbReference type="NCBIfam" id="NF001377">
    <property type="entry name" value="PRK00278.2-4"/>
    <property type="match status" value="1"/>
</dbReference>
<dbReference type="PANTHER" id="PTHR22854:SF2">
    <property type="entry name" value="INDOLE-3-GLYCEROL-PHOSPHATE SYNTHASE"/>
    <property type="match status" value="1"/>
</dbReference>
<dbReference type="PANTHER" id="PTHR22854">
    <property type="entry name" value="TRYPTOPHAN BIOSYNTHESIS PROTEIN"/>
    <property type="match status" value="1"/>
</dbReference>
<dbReference type="Pfam" id="PF00218">
    <property type="entry name" value="IGPS"/>
    <property type="match status" value="1"/>
</dbReference>
<dbReference type="SUPFAM" id="SSF51366">
    <property type="entry name" value="Ribulose-phoshate binding barrel"/>
    <property type="match status" value="1"/>
</dbReference>
<dbReference type="PROSITE" id="PS00614">
    <property type="entry name" value="IGPS"/>
    <property type="match status" value="1"/>
</dbReference>
<reference key="1">
    <citation type="journal article" date="2010" name="Genome Biol. Evol.">
        <title>Continuing evolution of Burkholderia mallei through genome reduction and large-scale rearrangements.</title>
        <authorList>
            <person name="Losada L."/>
            <person name="Ronning C.M."/>
            <person name="DeShazer D."/>
            <person name="Woods D."/>
            <person name="Fedorova N."/>
            <person name="Kim H.S."/>
            <person name="Shabalina S.A."/>
            <person name="Pearson T.R."/>
            <person name="Brinkac L."/>
            <person name="Tan P."/>
            <person name="Nandi T."/>
            <person name="Crabtree J."/>
            <person name="Badger J."/>
            <person name="Beckstrom-Sternberg S."/>
            <person name="Saqib M."/>
            <person name="Schutzer S.E."/>
            <person name="Keim P."/>
            <person name="Nierman W.C."/>
        </authorList>
    </citation>
    <scope>NUCLEOTIDE SEQUENCE [LARGE SCALE GENOMIC DNA]</scope>
    <source>
        <strain>1710b</strain>
    </source>
</reference>
<protein>
    <recommendedName>
        <fullName evidence="1">Indole-3-glycerol phosphate synthase</fullName>
        <shortName evidence="1">IGPS</shortName>
        <ecNumber evidence="1">4.1.1.48</ecNumber>
    </recommendedName>
</protein>
<feature type="chain" id="PRO_1000018459" description="Indole-3-glycerol phosphate synthase">
    <location>
        <begin position="1"/>
        <end position="261"/>
    </location>
</feature>